<organism>
    <name type="scientific">Legionella pneumophila (strain Lens)</name>
    <dbReference type="NCBI Taxonomy" id="297245"/>
    <lineage>
        <taxon>Bacteria</taxon>
        <taxon>Pseudomonadati</taxon>
        <taxon>Pseudomonadota</taxon>
        <taxon>Gammaproteobacteria</taxon>
        <taxon>Legionellales</taxon>
        <taxon>Legionellaceae</taxon>
        <taxon>Legionella</taxon>
    </lineage>
</organism>
<gene>
    <name evidence="1" type="primary">gpsA</name>
    <name type="ordered locus">lpl2228</name>
</gene>
<keyword id="KW-0963">Cytoplasm</keyword>
<keyword id="KW-0444">Lipid biosynthesis</keyword>
<keyword id="KW-0443">Lipid metabolism</keyword>
<keyword id="KW-0520">NAD</keyword>
<keyword id="KW-0521">NADP</keyword>
<keyword id="KW-0547">Nucleotide-binding</keyword>
<keyword id="KW-0560">Oxidoreductase</keyword>
<keyword id="KW-0594">Phospholipid biosynthesis</keyword>
<keyword id="KW-1208">Phospholipid metabolism</keyword>
<reference key="1">
    <citation type="journal article" date="2004" name="Nat. Genet.">
        <title>Evidence in the Legionella pneumophila genome for exploitation of host cell functions and high genome plasticity.</title>
        <authorList>
            <person name="Cazalet C."/>
            <person name="Rusniok C."/>
            <person name="Brueggemann H."/>
            <person name="Zidane N."/>
            <person name="Magnier A."/>
            <person name="Ma L."/>
            <person name="Tichit M."/>
            <person name="Jarraud S."/>
            <person name="Bouchier C."/>
            <person name="Vandenesch F."/>
            <person name="Kunst F."/>
            <person name="Etienne J."/>
            <person name="Glaser P."/>
            <person name="Buchrieser C."/>
        </authorList>
    </citation>
    <scope>NUCLEOTIDE SEQUENCE [LARGE SCALE GENOMIC DNA]</scope>
    <source>
        <strain>Lens</strain>
    </source>
</reference>
<feature type="chain" id="PRO_0000137980" description="Glycerol-3-phosphate dehydrogenase [NAD(P)+]">
    <location>
        <begin position="1"/>
        <end position="329"/>
    </location>
</feature>
<feature type="active site" description="Proton acceptor" evidence="1">
    <location>
        <position position="189"/>
    </location>
</feature>
<feature type="binding site" evidence="1">
    <location>
        <position position="13"/>
    </location>
    <ligand>
        <name>NADPH</name>
        <dbReference type="ChEBI" id="CHEBI:57783"/>
    </ligand>
</feature>
<feature type="binding site" evidence="1">
    <location>
        <position position="14"/>
    </location>
    <ligand>
        <name>NADPH</name>
        <dbReference type="ChEBI" id="CHEBI:57783"/>
    </ligand>
</feature>
<feature type="binding site" evidence="1">
    <location>
        <position position="34"/>
    </location>
    <ligand>
        <name>NADPH</name>
        <dbReference type="ChEBI" id="CHEBI:57783"/>
    </ligand>
</feature>
<feature type="binding site" evidence="1">
    <location>
        <position position="105"/>
    </location>
    <ligand>
        <name>NADPH</name>
        <dbReference type="ChEBI" id="CHEBI:57783"/>
    </ligand>
</feature>
<feature type="binding site" evidence="1">
    <location>
        <position position="105"/>
    </location>
    <ligand>
        <name>sn-glycerol 3-phosphate</name>
        <dbReference type="ChEBI" id="CHEBI:57597"/>
    </ligand>
</feature>
<feature type="binding site" evidence="1">
    <location>
        <position position="134"/>
    </location>
    <ligand>
        <name>sn-glycerol 3-phosphate</name>
        <dbReference type="ChEBI" id="CHEBI:57597"/>
    </ligand>
</feature>
<feature type="binding site" evidence="1">
    <location>
        <position position="136"/>
    </location>
    <ligand>
        <name>sn-glycerol 3-phosphate</name>
        <dbReference type="ChEBI" id="CHEBI:57597"/>
    </ligand>
</feature>
<feature type="binding site" evidence="1">
    <location>
        <position position="138"/>
    </location>
    <ligand>
        <name>NADPH</name>
        <dbReference type="ChEBI" id="CHEBI:57783"/>
    </ligand>
</feature>
<feature type="binding site" evidence="1">
    <location>
        <position position="189"/>
    </location>
    <ligand>
        <name>sn-glycerol 3-phosphate</name>
        <dbReference type="ChEBI" id="CHEBI:57597"/>
    </ligand>
</feature>
<feature type="binding site" evidence="1">
    <location>
        <position position="242"/>
    </location>
    <ligand>
        <name>sn-glycerol 3-phosphate</name>
        <dbReference type="ChEBI" id="CHEBI:57597"/>
    </ligand>
</feature>
<feature type="binding site" evidence="1">
    <location>
        <position position="252"/>
    </location>
    <ligand>
        <name>sn-glycerol 3-phosphate</name>
        <dbReference type="ChEBI" id="CHEBI:57597"/>
    </ligand>
</feature>
<feature type="binding site" evidence="1">
    <location>
        <position position="253"/>
    </location>
    <ligand>
        <name>NADPH</name>
        <dbReference type="ChEBI" id="CHEBI:57783"/>
    </ligand>
</feature>
<feature type="binding site" evidence="1">
    <location>
        <position position="253"/>
    </location>
    <ligand>
        <name>sn-glycerol 3-phosphate</name>
        <dbReference type="ChEBI" id="CHEBI:57597"/>
    </ligand>
</feature>
<feature type="binding site" evidence="1">
    <location>
        <position position="254"/>
    </location>
    <ligand>
        <name>sn-glycerol 3-phosphate</name>
        <dbReference type="ChEBI" id="CHEBI:57597"/>
    </ligand>
</feature>
<feature type="binding site" evidence="1">
    <location>
        <position position="277"/>
    </location>
    <ligand>
        <name>NADPH</name>
        <dbReference type="ChEBI" id="CHEBI:57783"/>
    </ligand>
</feature>
<feature type="binding site" evidence="1">
    <location>
        <position position="279"/>
    </location>
    <ligand>
        <name>NADPH</name>
        <dbReference type="ChEBI" id="CHEBI:57783"/>
    </ligand>
</feature>
<comment type="function">
    <text evidence="1">Catalyzes the reduction of the glycolytic intermediate dihydroxyacetone phosphate (DHAP) to sn-glycerol 3-phosphate (G3P), the key precursor for phospholipid synthesis.</text>
</comment>
<comment type="catalytic activity">
    <reaction evidence="1">
        <text>sn-glycerol 3-phosphate + NAD(+) = dihydroxyacetone phosphate + NADH + H(+)</text>
        <dbReference type="Rhea" id="RHEA:11092"/>
        <dbReference type="ChEBI" id="CHEBI:15378"/>
        <dbReference type="ChEBI" id="CHEBI:57540"/>
        <dbReference type="ChEBI" id="CHEBI:57597"/>
        <dbReference type="ChEBI" id="CHEBI:57642"/>
        <dbReference type="ChEBI" id="CHEBI:57945"/>
        <dbReference type="EC" id="1.1.1.94"/>
    </reaction>
    <physiologicalReaction direction="right-to-left" evidence="1">
        <dbReference type="Rhea" id="RHEA:11094"/>
    </physiologicalReaction>
</comment>
<comment type="catalytic activity">
    <reaction evidence="1">
        <text>sn-glycerol 3-phosphate + NADP(+) = dihydroxyacetone phosphate + NADPH + H(+)</text>
        <dbReference type="Rhea" id="RHEA:11096"/>
        <dbReference type="ChEBI" id="CHEBI:15378"/>
        <dbReference type="ChEBI" id="CHEBI:57597"/>
        <dbReference type="ChEBI" id="CHEBI:57642"/>
        <dbReference type="ChEBI" id="CHEBI:57783"/>
        <dbReference type="ChEBI" id="CHEBI:58349"/>
        <dbReference type="EC" id="1.1.1.94"/>
    </reaction>
    <physiologicalReaction direction="right-to-left" evidence="1">
        <dbReference type="Rhea" id="RHEA:11098"/>
    </physiologicalReaction>
</comment>
<comment type="pathway">
    <text evidence="1">Membrane lipid metabolism; glycerophospholipid metabolism.</text>
</comment>
<comment type="subcellular location">
    <subcellularLocation>
        <location evidence="1">Cytoplasm</location>
    </subcellularLocation>
</comment>
<comment type="similarity">
    <text evidence="1">Belongs to the NAD-dependent glycerol-3-phosphate dehydrogenase family.</text>
</comment>
<accession>Q5WUE0</accession>
<proteinExistence type="inferred from homology"/>
<evidence type="ECO:0000255" key="1">
    <source>
        <dbReference type="HAMAP-Rule" id="MF_00394"/>
    </source>
</evidence>
<name>GPDA_LEGPL</name>
<protein>
    <recommendedName>
        <fullName evidence="1">Glycerol-3-phosphate dehydrogenase [NAD(P)+]</fullName>
        <ecNumber evidence="1">1.1.1.94</ecNumber>
    </recommendedName>
    <alternativeName>
        <fullName evidence="1">NAD(P)(+)-dependent glycerol-3-phosphate dehydrogenase</fullName>
    </alternativeName>
    <alternativeName>
        <fullName evidence="1">NAD(P)H-dependent dihydroxyacetone-phosphate reductase</fullName>
    </alternativeName>
</protein>
<dbReference type="EC" id="1.1.1.94" evidence="1"/>
<dbReference type="EMBL" id="CR628337">
    <property type="protein sequence ID" value="CAH16468.1"/>
    <property type="molecule type" value="Genomic_DNA"/>
</dbReference>
<dbReference type="RefSeq" id="WP_011216201.1">
    <property type="nucleotide sequence ID" value="NC_006369.1"/>
</dbReference>
<dbReference type="SMR" id="Q5WUE0"/>
<dbReference type="KEGG" id="lpf:lpl2228"/>
<dbReference type="LegioList" id="lpl2228"/>
<dbReference type="HOGENOM" id="CLU_033449_0_2_6"/>
<dbReference type="UniPathway" id="UPA00940"/>
<dbReference type="Proteomes" id="UP000002517">
    <property type="component" value="Chromosome"/>
</dbReference>
<dbReference type="GO" id="GO:0005829">
    <property type="term" value="C:cytosol"/>
    <property type="evidence" value="ECO:0007669"/>
    <property type="project" value="TreeGrafter"/>
</dbReference>
<dbReference type="GO" id="GO:0047952">
    <property type="term" value="F:glycerol-3-phosphate dehydrogenase [NAD(P)+] activity"/>
    <property type="evidence" value="ECO:0007669"/>
    <property type="project" value="UniProtKB-UniRule"/>
</dbReference>
<dbReference type="GO" id="GO:0051287">
    <property type="term" value="F:NAD binding"/>
    <property type="evidence" value="ECO:0007669"/>
    <property type="project" value="InterPro"/>
</dbReference>
<dbReference type="GO" id="GO:0005975">
    <property type="term" value="P:carbohydrate metabolic process"/>
    <property type="evidence" value="ECO:0007669"/>
    <property type="project" value="InterPro"/>
</dbReference>
<dbReference type="GO" id="GO:0046167">
    <property type="term" value="P:glycerol-3-phosphate biosynthetic process"/>
    <property type="evidence" value="ECO:0007669"/>
    <property type="project" value="UniProtKB-UniRule"/>
</dbReference>
<dbReference type="GO" id="GO:0046168">
    <property type="term" value="P:glycerol-3-phosphate catabolic process"/>
    <property type="evidence" value="ECO:0007669"/>
    <property type="project" value="InterPro"/>
</dbReference>
<dbReference type="GO" id="GO:0046474">
    <property type="term" value="P:glycerophospholipid biosynthetic process"/>
    <property type="evidence" value="ECO:0007669"/>
    <property type="project" value="TreeGrafter"/>
</dbReference>
<dbReference type="FunFam" id="1.10.1040.10:FF:000001">
    <property type="entry name" value="Glycerol-3-phosphate dehydrogenase [NAD(P)+]"/>
    <property type="match status" value="1"/>
</dbReference>
<dbReference type="FunFam" id="3.40.50.720:FF:000019">
    <property type="entry name" value="Glycerol-3-phosphate dehydrogenase [NAD(P)+]"/>
    <property type="match status" value="1"/>
</dbReference>
<dbReference type="Gene3D" id="1.10.1040.10">
    <property type="entry name" value="N-(1-d-carboxylethyl)-l-norvaline Dehydrogenase, domain 2"/>
    <property type="match status" value="1"/>
</dbReference>
<dbReference type="Gene3D" id="3.40.50.720">
    <property type="entry name" value="NAD(P)-binding Rossmann-like Domain"/>
    <property type="match status" value="1"/>
</dbReference>
<dbReference type="HAMAP" id="MF_00394">
    <property type="entry name" value="NAD_Glyc3P_dehydrog"/>
    <property type="match status" value="1"/>
</dbReference>
<dbReference type="InterPro" id="IPR008927">
    <property type="entry name" value="6-PGluconate_DH-like_C_sf"/>
</dbReference>
<dbReference type="InterPro" id="IPR013328">
    <property type="entry name" value="6PGD_dom2"/>
</dbReference>
<dbReference type="InterPro" id="IPR006168">
    <property type="entry name" value="G3P_DH_NAD-dep"/>
</dbReference>
<dbReference type="InterPro" id="IPR006109">
    <property type="entry name" value="G3P_DH_NAD-dep_C"/>
</dbReference>
<dbReference type="InterPro" id="IPR011128">
    <property type="entry name" value="G3P_DH_NAD-dep_N"/>
</dbReference>
<dbReference type="InterPro" id="IPR036291">
    <property type="entry name" value="NAD(P)-bd_dom_sf"/>
</dbReference>
<dbReference type="NCBIfam" id="NF000940">
    <property type="entry name" value="PRK00094.1-2"/>
    <property type="match status" value="1"/>
</dbReference>
<dbReference type="NCBIfam" id="NF000942">
    <property type="entry name" value="PRK00094.1-4"/>
    <property type="match status" value="1"/>
</dbReference>
<dbReference type="PANTHER" id="PTHR11728">
    <property type="entry name" value="GLYCEROL-3-PHOSPHATE DEHYDROGENASE"/>
    <property type="match status" value="1"/>
</dbReference>
<dbReference type="PANTHER" id="PTHR11728:SF1">
    <property type="entry name" value="GLYCEROL-3-PHOSPHATE DEHYDROGENASE [NAD(+)] 2, CHLOROPLASTIC"/>
    <property type="match status" value="1"/>
</dbReference>
<dbReference type="Pfam" id="PF07479">
    <property type="entry name" value="NAD_Gly3P_dh_C"/>
    <property type="match status" value="1"/>
</dbReference>
<dbReference type="Pfam" id="PF01210">
    <property type="entry name" value="NAD_Gly3P_dh_N"/>
    <property type="match status" value="1"/>
</dbReference>
<dbReference type="PIRSF" id="PIRSF000114">
    <property type="entry name" value="Glycerol-3-P_dh"/>
    <property type="match status" value="1"/>
</dbReference>
<dbReference type="PRINTS" id="PR00077">
    <property type="entry name" value="GPDHDRGNASE"/>
</dbReference>
<dbReference type="SUPFAM" id="SSF48179">
    <property type="entry name" value="6-phosphogluconate dehydrogenase C-terminal domain-like"/>
    <property type="match status" value="1"/>
</dbReference>
<dbReference type="SUPFAM" id="SSF51735">
    <property type="entry name" value="NAD(P)-binding Rossmann-fold domains"/>
    <property type="match status" value="1"/>
</dbReference>
<dbReference type="PROSITE" id="PS00957">
    <property type="entry name" value="NAD_G3PDH"/>
    <property type="match status" value="1"/>
</dbReference>
<sequence length="329" mass="35437">MNKKTIAMLGAGSWGTAVAIHLAKIGHKTLLWSHNPQHVALMAEQHSNPAYLPGIPFPENLIPSDNLIECVQSANYVIIAVPSHAFAEIINKIPKPTQGLAWLTKGVDPASHELLSQLVASRFGVDFPIAVISGPSFAKEVARFLPTALTLASNNTNYQKKMHQLFHHDNIRVYLSDDLIGVQLCGAVKNILAIACGISDGLGYGANAKAALITRGLAEMTRLGLSMGARQDTFLGLAGVGDLVLTCTDDQSRNRRFGLLLGREVPIPEAEHQIGQVVEGKHNAAQICAIANKNRVEMPICEQINALLHGIVHAQEAVNNLMSRPAKEE</sequence>